<comment type="function">
    <text evidence="1">Involved in the biosynthesis of osmoregulated periplasmic glucans (OPGs).</text>
</comment>
<comment type="pathway">
    <text evidence="1">Glycan metabolism; osmoregulated periplasmic glucan (OPG) biosynthesis.</text>
</comment>
<comment type="subcellular location">
    <subcellularLocation>
        <location evidence="1">Periplasm</location>
    </subcellularLocation>
</comment>
<comment type="similarity">
    <text evidence="1">Belongs to the OpgD/OpgG family.</text>
</comment>
<accession>B7LFG0</accession>
<name>OPGG_ECO55</name>
<feature type="signal peptide" evidence="1">
    <location>
        <begin position="1"/>
        <end position="22"/>
    </location>
</feature>
<feature type="chain" id="PRO_1000149747" description="Glucans biosynthesis protein G">
    <location>
        <begin position="23"/>
        <end position="511"/>
    </location>
</feature>
<proteinExistence type="inferred from homology"/>
<reference key="1">
    <citation type="journal article" date="2009" name="PLoS Genet.">
        <title>Organised genome dynamics in the Escherichia coli species results in highly diverse adaptive paths.</title>
        <authorList>
            <person name="Touchon M."/>
            <person name="Hoede C."/>
            <person name="Tenaillon O."/>
            <person name="Barbe V."/>
            <person name="Baeriswyl S."/>
            <person name="Bidet P."/>
            <person name="Bingen E."/>
            <person name="Bonacorsi S."/>
            <person name="Bouchier C."/>
            <person name="Bouvet O."/>
            <person name="Calteau A."/>
            <person name="Chiapello H."/>
            <person name="Clermont O."/>
            <person name="Cruveiller S."/>
            <person name="Danchin A."/>
            <person name="Diard M."/>
            <person name="Dossat C."/>
            <person name="Karoui M.E."/>
            <person name="Frapy E."/>
            <person name="Garry L."/>
            <person name="Ghigo J.M."/>
            <person name="Gilles A.M."/>
            <person name="Johnson J."/>
            <person name="Le Bouguenec C."/>
            <person name="Lescat M."/>
            <person name="Mangenot S."/>
            <person name="Martinez-Jehanne V."/>
            <person name="Matic I."/>
            <person name="Nassif X."/>
            <person name="Oztas S."/>
            <person name="Petit M.A."/>
            <person name="Pichon C."/>
            <person name="Rouy Z."/>
            <person name="Ruf C.S."/>
            <person name="Schneider D."/>
            <person name="Tourret J."/>
            <person name="Vacherie B."/>
            <person name="Vallenet D."/>
            <person name="Medigue C."/>
            <person name="Rocha E.P.C."/>
            <person name="Denamur E."/>
        </authorList>
    </citation>
    <scope>NUCLEOTIDE SEQUENCE [LARGE SCALE GENOMIC DNA]</scope>
    <source>
        <strain>55989 / EAEC</strain>
    </source>
</reference>
<protein>
    <recommendedName>
        <fullName evidence="1">Glucans biosynthesis protein G</fullName>
    </recommendedName>
</protein>
<dbReference type="EMBL" id="CU928145">
    <property type="protein sequence ID" value="CAU97022.1"/>
    <property type="molecule type" value="Genomic_DNA"/>
</dbReference>
<dbReference type="RefSeq" id="WP_001300662.1">
    <property type="nucleotide sequence ID" value="NZ_CP028304.1"/>
</dbReference>
<dbReference type="SMR" id="B7LFG0"/>
<dbReference type="GeneID" id="93776366"/>
<dbReference type="KEGG" id="eck:EC55989_1163"/>
<dbReference type="HOGENOM" id="CLU_023403_2_0_6"/>
<dbReference type="UniPathway" id="UPA00637"/>
<dbReference type="Proteomes" id="UP000000746">
    <property type="component" value="Chromosome"/>
</dbReference>
<dbReference type="GO" id="GO:0030288">
    <property type="term" value="C:outer membrane-bounded periplasmic space"/>
    <property type="evidence" value="ECO:0007669"/>
    <property type="project" value="TreeGrafter"/>
</dbReference>
<dbReference type="GO" id="GO:0030246">
    <property type="term" value="F:carbohydrate binding"/>
    <property type="evidence" value="ECO:0007669"/>
    <property type="project" value="InterPro"/>
</dbReference>
<dbReference type="GO" id="GO:0003824">
    <property type="term" value="F:catalytic activity"/>
    <property type="evidence" value="ECO:0007669"/>
    <property type="project" value="InterPro"/>
</dbReference>
<dbReference type="GO" id="GO:0051274">
    <property type="term" value="P:beta-glucan biosynthetic process"/>
    <property type="evidence" value="ECO:0007669"/>
    <property type="project" value="TreeGrafter"/>
</dbReference>
<dbReference type="FunFam" id="2.60.40.10:FF:000294">
    <property type="entry name" value="Glucans biosynthesis protein G"/>
    <property type="match status" value="1"/>
</dbReference>
<dbReference type="FunFam" id="2.70.98.10:FF:000001">
    <property type="entry name" value="Glucans biosynthesis protein G"/>
    <property type="match status" value="1"/>
</dbReference>
<dbReference type="Gene3D" id="2.70.98.10">
    <property type="match status" value="1"/>
</dbReference>
<dbReference type="Gene3D" id="2.60.40.10">
    <property type="entry name" value="Immunoglobulins"/>
    <property type="match status" value="1"/>
</dbReference>
<dbReference type="HAMAP" id="MF_01069">
    <property type="entry name" value="MdoG_OpgG"/>
    <property type="match status" value="1"/>
</dbReference>
<dbReference type="InterPro" id="IPR011013">
    <property type="entry name" value="Gal_mutarotase_sf_dom"/>
</dbReference>
<dbReference type="InterPro" id="IPR014718">
    <property type="entry name" value="GH-type_carb-bd"/>
</dbReference>
<dbReference type="InterPro" id="IPR014438">
    <property type="entry name" value="Glucan_biosyn_MdoG/MdoD"/>
</dbReference>
<dbReference type="InterPro" id="IPR007444">
    <property type="entry name" value="Glucan_biosyn_MdoG_C"/>
</dbReference>
<dbReference type="InterPro" id="IPR013783">
    <property type="entry name" value="Ig-like_fold"/>
</dbReference>
<dbReference type="InterPro" id="IPR014756">
    <property type="entry name" value="Ig_E-set"/>
</dbReference>
<dbReference type="InterPro" id="IPR023704">
    <property type="entry name" value="MdoG_OpgG"/>
</dbReference>
<dbReference type="PANTHER" id="PTHR30504">
    <property type="entry name" value="GLUCANS BIOSYNTHESIS PROTEIN"/>
    <property type="match status" value="1"/>
</dbReference>
<dbReference type="PANTHER" id="PTHR30504:SF4">
    <property type="entry name" value="GLUCANS BIOSYNTHESIS PROTEIN G"/>
    <property type="match status" value="1"/>
</dbReference>
<dbReference type="Pfam" id="PF04349">
    <property type="entry name" value="MdoG"/>
    <property type="match status" value="1"/>
</dbReference>
<dbReference type="PIRSF" id="PIRSF006281">
    <property type="entry name" value="MdoG"/>
    <property type="match status" value="1"/>
</dbReference>
<dbReference type="SUPFAM" id="SSF81296">
    <property type="entry name" value="E set domains"/>
    <property type="match status" value="1"/>
</dbReference>
<dbReference type="SUPFAM" id="SSF74650">
    <property type="entry name" value="Galactose mutarotase-like"/>
    <property type="match status" value="1"/>
</dbReference>
<gene>
    <name evidence="1" type="primary">mdoG</name>
    <name evidence="1" type="synonym">opgG</name>
    <name type="ordered locus">EC55989_1163</name>
</gene>
<sequence>MMKMRWLSAAVMLTLYTSSSWAFSIDDVAKQAQSLAGKGYEAPKSNLPSVFRDMKYADYQQIQFNHDKAYWNNLKTPFKLEFYHQGMYFDTPVKINEVTATAVKRIKYSPDYFTFGDVQHDKDTVKDLGFAGFKVLYPINSKDKNDEIVSMLGASYFRVIGAGQVYGLSARGLAIDTALPSGEEFPRFKEFWIERPKPTDKRLTIYALLDSPRATGAYKFVVMPGRDTVVDVQSKIYLRDKVGKLGVAPLTSMFLFGPNQPSPANNYRPELHDSNGLSIHAGNGEWIWRPLNNPKHLAVSSFSMENPQGFGLLQRGRDFSRFEDLDDRYDLRPSAWVTPKGEWGKGSVELVEIPTNDETNDNIVAYWTPDQLPEPGKEMNFKYTITFSRDEDKLHAPDNAWVQQTRRSTGDVKQSNLIRQPDGTIAFVVDFTGAEMKKLPEDTPVTAQTSIGDNGEIVESTVRYNPVTKGWRLVMRVKVKDAKKTTEMRAALVNADQTLSETWSYQLPANE</sequence>
<keyword id="KW-0574">Periplasm</keyword>
<keyword id="KW-1185">Reference proteome</keyword>
<keyword id="KW-0732">Signal</keyword>
<organism>
    <name type="scientific">Escherichia coli (strain 55989 / EAEC)</name>
    <dbReference type="NCBI Taxonomy" id="585055"/>
    <lineage>
        <taxon>Bacteria</taxon>
        <taxon>Pseudomonadati</taxon>
        <taxon>Pseudomonadota</taxon>
        <taxon>Gammaproteobacteria</taxon>
        <taxon>Enterobacterales</taxon>
        <taxon>Enterobacteriaceae</taxon>
        <taxon>Escherichia</taxon>
    </lineage>
</organism>
<evidence type="ECO:0000255" key="1">
    <source>
        <dbReference type="HAMAP-Rule" id="MF_01069"/>
    </source>
</evidence>